<keyword id="KW-0028">Amino-acid biosynthesis</keyword>
<keyword id="KW-0413">Isomerase</keyword>
<keyword id="KW-0486">Methionine biosynthesis</keyword>
<keyword id="KW-1185">Reference proteome</keyword>
<organism>
    <name type="scientific">Acetivibrio thermocellus (strain ATCC 27405 / DSM 1237 / JCM 9322 / NBRC 103400 / NCIMB 10682 / NRRL B-4536 / VPI 7372)</name>
    <name type="common">Clostridium thermocellum</name>
    <dbReference type="NCBI Taxonomy" id="203119"/>
    <lineage>
        <taxon>Bacteria</taxon>
        <taxon>Bacillati</taxon>
        <taxon>Bacillota</taxon>
        <taxon>Clostridia</taxon>
        <taxon>Eubacteriales</taxon>
        <taxon>Oscillospiraceae</taxon>
        <taxon>Acetivibrio</taxon>
    </lineage>
</organism>
<comment type="function">
    <text evidence="1">Catalyzes the interconversion of methylthioribose-1-phosphate (MTR-1-P) into methylthioribulose-1-phosphate (MTRu-1-P).</text>
</comment>
<comment type="catalytic activity">
    <reaction evidence="1">
        <text>5-(methylsulfanyl)-alpha-D-ribose 1-phosphate = 5-(methylsulfanyl)-D-ribulose 1-phosphate</text>
        <dbReference type="Rhea" id="RHEA:19989"/>
        <dbReference type="ChEBI" id="CHEBI:58533"/>
        <dbReference type="ChEBI" id="CHEBI:58548"/>
        <dbReference type="EC" id="5.3.1.23"/>
    </reaction>
</comment>
<comment type="pathway">
    <text evidence="1">Amino-acid biosynthesis; L-methionine biosynthesis via salvage pathway; L-methionine from S-methyl-5-thio-alpha-D-ribose 1-phosphate: step 1/6.</text>
</comment>
<comment type="similarity">
    <text evidence="2">Belongs to the eIF-2B alpha/beta/delta subunits family. MtnA subfamily.</text>
</comment>
<gene>
    <name evidence="1" type="primary">mtnA</name>
    <name type="ordered locus">Cthe_0621</name>
</gene>
<dbReference type="EC" id="5.3.1.23" evidence="1"/>
<dbReference type="EMBL" id="CP000568">
    <property type="protein sequence ID" value="ABN51856.1"/>
    <property type="molecule type" value="Genomic_DNA"/>
</dbReference>
<dbReference type="RefSeq" id="WP_003516545.1">
    <property type="nucleotide sequence ID" value="NC_009012.1"/>
</dbReference>
<dbReference type="SMR" id="A3DD27"/>
<dbReference type="STRING" id="203119.Cthe_0621"/>
<dbReference type="GeneID" id="35804054"/>
<dbReference type="KEGG" id="cth:Cthe_0621"/>
<dbReference type="eggNOG" id="COG0182">
    <property type="taxonomic scope" value="Bacteria"/>
</dbReference>
<dbReference type="HOGENOM" id="CLU_016218_1_2_9"/>
<dbReference type="OrthoDB" id="9803436at2"/>
<dbReference type="UniPathway" id="UPA00904">
    <property type="reaction ID" value="UER00874"/>
</dbReference>
<dbReference type="Proteomes" id="UP000002145">
    <property type="component" value="Chromosome"/>
</dbReference>
<dbReference type="GO" id="GO:0046523">
    <property type="term" value="F:S-methyl-5-thioribose-1-phosphate isomerase activity"/>
    <property type="evidence" value="ECO:0007669"/>
    <property type="project" value="UniProtKB-UniRule"/>
</dbReference>
<dbReference type="GO" id="GO:0019509">
    <property type="term" value="P:L-methionine salvage from methylthioadenosine"/>
    <property type="evidence" value="ECO:0007669"/>
    <property type="project" value="UniProtKB-UniRule"/>
</dbReference>
<dbReference type="FunFam" id="1.20.120.420:FF:000003">
    <property type="entry name" value="Methylthioribose-1-phosphate isomerase"/>
    <property type="match status" value="1"/>
</dbReference>
<dbReference type="FunFam" id="3.40.50.10470:FF:000010">
    <property type="entry name" value="Methylthioribose-1-phosphate isomerase"/>
    <property type="match status" value="1"/>
</dbReference>
<dbReference type="Gene3D" id="1.20.120.420">
    <property type="entry name" value="translation initiation factor eif-2b, domain 1"/>
    <property type="match status" value="1"/>
</dbReference>
<dbReference type="Gene3D" id="3.40.50.10470">
    <property type="entry name" value="Translation initiation factor eif-2b, domain 2"/>
    <property type="match status" value="1"/>
</dbReference>
<dbReference type="HAMAP" id="MF_01678">
    <property type="entry name" value="Salvage_MtnA"/>
    <property type="match status" value="1"/>
</dbReference>
<dbReference type="InterPro" id="IPR000649">
    <property type="entry name" value="IF-2B-related"/>
</dbReference>
<dbReference type="InterPro" id="IPR005251">
    <property type="entry name" value="IF-M1Pi"/>
</dbReference>
<dbReference type="InterPro" id="IPR042529">
    <property type="entry name" value="IF_2B-like_C"/>
</dbReference>
<dbReference type="InterPro" id="IPR011559">
    <property type="entry name" value="Initiation_fac_2B_a/b/d"/>
</dbReference>
<dbReference type="InterPro" id="IPR027363">
    <property type="entry name" value="M1Pi_N"/>
</dbReference>
<dbReference type="InterPro" id="IPR037171">
    <property type="entry name" value="NagB/RpiA_transferase-like"/>
</dbReference>
<dbReference type="NCBIfam" id="TIGR00524">
    <property type="entry name" value="eIF-2B_rel"/>
    <property type="match status" value="1"/>
</dbReference>
<dbReference type="NCBIfam" id="NF004326">
    <property type="entry name" value="PRK05720.1"/>
    <property type="match status" value="1"/>
</dbReference>
<dbReference type="NCBIfam" id="TIGR00512">
    <property type="entry name" value="salvage_mtnA"/>
    <property type="match status" value="1"/>
</dbReference>
<dbReference type="PANTHER" id="PTHR43475">
    <property type="entry name" value="METHYLTHIORIBOSE-1-PHOSPHATE ISOMERASE"/>
    <property type="match status" value="1"/>
</dbReference>
<dbReference type="PANTHER" id="PTHR43475:SF1">
    <property type="entry name" value="METHYLTHIORIBOSE-1-PHOSPHATE ISOMERASE"/>
    <property type="match status" value="1"/>
</dbReference>
<dbReference type="Pfam" id="PF01008">
    <property type="entry name" value="IF-2B"/>
    <property type="match status" value="1"/>
</dbReference>
<dbReference type="SUPFAM" id="SSF100950">
    <property type="entry name" value="NagB/RpiA/CoA transferase-like"/>
    <property type="match status" value="1"/>
</dbReference>
<sequence length="342" mass="37858">MKPLEYCNGVLKLLDQTLLPGEQKIVELKNYIEVADAIKNMIVRGAPAIGVTAAYGVAIASKAINTDSKEEFFAELAKVCDIIKSTRPTAVNLFWAVDRVYSRAVSNRDKTIEEIKKLIEEEAYLMEKEDIESNRSIGRFGNELIKENWTILTHCNAGALATCDYGTALGVIRAAHESGKNIQVFADETRPYLQGARLTAWELMQDNIPVTLICDNMAGHFMKEGLIDCVIVGADRIALNGDTANKIGTYSLAVLAKENNIPFYVAAPTTTIDFSIETGEQIPIEERSPAEITHIKGIRIAPEGVKVRNPAFDVTPNKYISAIITEKGIIYPPYDENIKKYR</sequence>
<feature type="chain" id="PRO_0000357168" description="Methylthioribose-1-phosphate isomerase">
    <location>
        <begin position="1"/>
        <end position="342"/>
    </location>
</feature>
<feature type="active site" description="Proton donor" evidence="1">
    <location>
        <position position="235"/>
    </location>
</feature>
<feature type="binding site" evidence="1">
    <location>
        <begin position="44"/>
        <end position="46"/>
    </location>
    <ligand>
        <name>substrate</name>
    </ligand>
</feature>
<feature type="binding site" evidence="1">
    <location>
        <position position="87"/>
    </location>
    <ligand>
        <name>substrate</name>
    </ligand>
</feature>
<feature type="binding site" evidence="1">
    <location>
        <position position="194"/>
    </location>
    <ligand>
        <name>substrate</name>
    </ligand>
</feature>
<feature type="binding site" evidence="1">
    <location>
        <begin position="245"/>
        <end position="246"/>
    </location>
    <ligand>
        <name>substrate</name>
    </ligand>
</feature>
<feature type="site" description="Transition state stabilizer" evidence="1">
    <location>
        <position position="155"/>
    </location>
</feature>
<reference key="1">
    <citation type="submission" date="2007-02" db="EMBL/GenBank/DDBJ databases">
        <title>Complete sequence of Clostridium thermocellum ATCC 27405.</title>
        <authorList>
            <consortium name="US DOE Joint Genome Institute"/>
            <person name="Copeland A."/>
            <person name="Lucas S."/>
            <person name="Lapidus A."/>
            <person name="Barry K."/>
            <person name="Detter J.C."/>
            <person name="Glavina del Rio T."/>
            <person name="Hammon N."/>
            <person name="Israni S."/>
            <person name="Dalin E."/>
            <person name="Tice H."/>
            <person name="Pitluck S."/>
            <person name="Chertkov O."/>
            <person name="Brettin T."/>
            <person name="Bruce D."/>
            <person name="Han C."/>
            <person name="Tapia R."/>
            <person name="Gilna P."/>
            <person name="Schmutz J."/>
            <person name="Larimer F."/>
            <person name="Land M."/>
            <person name="Hauser L."/>
            <person name="Kyrpides N."/>
            <person name="Mikhailova N."/>
            <person name="Wu J.H.D."/>
            <person name="Newcomb M."/>
            <person name="Richardson P."/>
        </authorList>
    </citation>
    <scope>NUCLEOTIDE SEQUENCE [LARGE SCALE GENOMIC DNA]</scope>
    <source>
        <strain>ATCC 27405 / DSM 1237 / JCM 9322 / NBRC 103400 / NCIMB 10682 / NRRL B-4536 / VPI 7372</strain>
    </source>
</reference>
<protein>
    <recommendedName>
        <fullName evidence="1">Methylthioribose-1-phosphate isomerase</fullName>
        <shortName evidence="1">M1Pi</shortName>
        <shortName evidence="1">MTR-1-P isomerase</shortName>
        <ecNumber evidence="1">5.3.1.23</ecNumber>
    </recommendedName>
    <alternativeName>
        <fullName evidence="1">S-methyl-5-thioribose-1-phosphate isomerase</fullName>
    </alternativeName>
</protein>
<name>MTNA_ACET2</name>
<proteinExistence type="inferred from homology"/>
<evidence type="ECO:0000255" key="1">
    <source>
        <dbReference type="HAMAP-Rule" id="MF_01678"/>
    </source>
</evidence>
<evidence type="ECO:0000305" key="2"/>
<accession>A3DD27</accession>